<evidence type="ECO:0000255" key="1"/>
<evidence type="ECO:0000255" key="2">
    <source>
        <dbReference type="PROSITE-ProRule" id="PRU00521"/>
    </source>
</evidence>
<evidence type="ECO:0000305" key="3"/>
<keyword id="KW-1015">Disulfide bond</keyword>
<keyword id="KW-0297">G-protein coupled receptor</keyword>
<keyword id="KW-0325">Glycoprotein</keyword>
<keyword id="KW-1032">Host cell membrane</keyword>
<keyword id="KW-1043">Host membrane</keyword>
<keyword id="KW-0472">Membrane</keyword>
<keyword id="KW-0675">Receptor</keyword>
<keyword id="KW-1185">Reference proteome</keyword>
<keyword id="KW-0807">Transducer</keyword>
<keyword id="KW-0812">Transmembrane</keyword>
<keyword id="KW-1133">Transmembrane helix</keyword>
<organismHost>
    <name type="scientific">Vertebrata</name>
    <dbReference type="NCBI Taxonomy" id="7742"/>
</organismHost>
<protein>
    <recommendedName>
        <fullName>G-protein coupled receptor homolog FPV021</fullName>
    </recommendedName>
</protein>
<gene>
    <name type="ordered locus">FPV021</name>
</gene>
<accession>Q9J5I0</accession>
<feature type="chain" id="PRO_0000070248" description="G-protein coupled receptor homolog FPV021">
    <location>
        <begin position="1"/>
        <end position="320"/>
    </location>
</feature>
<feature type="topological domain" description="Extracellular" evidence="1">
    <location>
        <begin position="1"/>
        <end position="18"/>
    </location>
</feature>
<feature type="transmembrane region" description="Helical; Name=1" evidence="1">
    <location>
        <begin position="19"/>
        <end position="39"/>
    </location>
</feature>
<feature type="topological domain" description="Cytoplasmic" evidence="1">
    <location>
        <begin position="40"/>
        <end position="52"/>
    </location>
</feature>
<feature type="transmembrane region" description="Helical; Name=2" evidence="1">
    <location>
        <begin position="53"/>
        <end position="73"/>
    </location>
</feature>
<feature type="topological domain" description="Extracellular" evidence="1">
    <location>
        <begin position="74"/>
        <end position="91"/>
    </location>
</feature>
<feature type="transmembrane region" description="Helical; Name=3" evidence="1">
    <location>
        <begin position="92"/>
        <end position="112"/>
    </location>
</feature>
<feature type="topological domain" description="Cytoplasmic" evidence="1">
    <location>
        <begin position="113"/>
        <end position="133"/>
    </location>
</feature>
<feature type="transmembrane region" description="Helical; Name=4" evidence="1">
    <location>
        <begin position="134"/>
        <end position="154"/>
    </location>
</feature>
<feature type="topological domain" description="Extracellular" evidence="1">
    <location>
        <begin position="155"/>
        <end position="188"/>
    </location>
</feature>
<feature type="transmembrane region" description="Helical; Name=5" evidence="1">
    <location>
        <begin position="189"/>
        <end position="209"/>
    </location>
</feature>
<feature type="topological domain" description="Cytoplasmic" evidence="1">
    <location>
        <begin position="210"/>
        <end position="222"/>
    </location>
</feature>
<feature type="transmembrane region" description="Helical; Name=6" evidence="1">
    <location>
        <begin position="223"/>
        <end position="243"/>
    </location>
</feature>
<feature type="topological domain" description="Extracellular" evidence="1">
    <location>
        <begin position="244"/>
        <end position="260"/>
    </location>
</feature>
<feature type="transmembrane region" description="Helical; Name=7" evidence="1">
    <location>
        <begin position="261"/>
        <end position="281"/>
    </location>
</feature>
<feature type="topological domain" description="Cytoplasmic" evidence="1">
    <location>
        <begin position="282"/>
        <end position="320"/>
    </location>
</feature>
<feature type="glycosylation site" description="N-linked (GlcNAc...) asparagine; by host" evidence="1">
    <location>
        <position position="175"/>
    </location>
</feature>
<feature type="disulfide bond" evidence="2">
    <location>
        <begin position="89"/>
        <end position="167"/>
    </location>
</feature>
<dbReference type="EMBL" id="AF198100">
    <property type="protein sequence ID" value="AAF44365.1"/>
    <property type="molecule type" value="Genomic_DNA"/>
</dbReference>
<dbReference type="RefSeq" id="NP_038984.1">
    <property type="nucleotide sequence ID" value="NC_002188.1"/>
</dbReference>
<dbReference type="SMR" id="Q9J5I0"/>
<dbReference type="GeneID" id="1486740"/>
<dbReference type="KEGG" id="vg:1486740"/>
<dbReference type="Proteomes" id="UP000008597">
    <property type="component" value="Segment"/>
</dbReference>
<dbReference type="GO" id="GO:0020002">
    <property type="term" value="C:host cell plasma membrane"/>
    <property type="evidence" value="ECO:0007669"/>
    <property type="project" value="UniProtKB-SubCell"/>
</dbReference>
<dbReference type="GO" id="GO:0005886">
    <property type="term" value="C:plasma membrane"/>
    <property type="evidence" value="ECO:0007669"/>
    <property type="project" value="TreeGrafter"/>
</dbReference>
<dbReference type="GO" id="GO:0004875">
    <property type="term" value="F:complement receptor activity"/>
    <property type="evidence" value="ECO:0007669"/>
    <property type="project" value="TreeGrafter"/>
</dbReference>
<dbReference type="GO" id="GO:0004930">
    <property type="term" value="F:G protein-coupled receptor activity"/>
    <property type="evidence" value="ECO:0007669"/>
    <property type="project" value="UniProtKB-KW"/>
</dbReference>
<dbReference type="GO" id="GO:0007200">
    <property type="term" value="P:phospholipase C-activating G protein-coupled receptor signaling pathway"/>
    <property type="evidence" value="ECO:0007669"/>
    <property type="project" value="TreeGrafter"/>
</dbReference>
<dbReference type="GO" id="GO:0007204">
    <property type="term" value="P:positive regulation of cytosolic calcium ion concentration"/>
    <property type="evidence" value="ECO:0007669"/>
    <property type="project" value="TreeGrafter"/>
</dbReference>
<dbReference type="Gene3D" id="1.20.1070.10">
    <property type="entry name" value="Rhodopsin 7-helix transmembrane proteins"/>
    <property type="match status" value="1"/>
</dbReference>
<dbReference type="InterPro" id="IPR000248">
    <property type="entry name" value="ATII_rcpt"/>
</dbReference>
<dbReference type="InterPro" id="IPR000826">
    <property type="entry name" value="Formyl_rcpt-rel"/>
</dbReference>
<dbReference type="InterPro" id="IPR000276">
    <property type="entry name" value="GPCR_Rhodpsn"/>
</dbReference>
<dbReference type="InterPro" id="IPR017452">
    <property type="entry name" value="GPCR_Rhodpsn_7TM"/>
</dbReference>
<dbReference type="PANTHER" id="PTHR24225">
    <property type="entry name" value="CHEMOTACTIC RECEPTOR"/>
    <property type="match status" value="1"/>
</dbReference>
<dbReference type="PANTHER" id="PTHR24225:SF24">
    <property type="entry name" value="G-PROTEIN COUPLED RECEPTORS FAMILY 1 PROFILE DOMAIN-CONTAINING PROTEIN"/>
    <property type="match status" value="1"/>
</dbReference>
<dbReference type="Pfam" id="PF00001">
    <property type="entry name" value="7tm_1"/>
    <property type="match status" value="1"/>
</dbReference>
<dbReference type="PRINTS" id="PR00241">
    <property type="entry name" value="ANGIOTENSINR"/>
</dbReference>
<dbReference type="PRINTS" id="PR00237">
    <property type="entry name" value="GPCRRHODOPSN"/>
</dbReference>
<dbReference type="SUPFAM" id="SSF81321">
    <property type="entry name" value="Family A G protein-coupled receptor-like"/>
    <property type="match status" value="1"/>
</dbReference>
<dbReference type="PROSITE" id="PS50262">
    <property type="entry name" value="G_PROTEIN_RECEP_F1_2"/>
    <property type="match status" value="1"/>
</dbReference>
<proteinExistence type="inferred from homology"/>
<sequence length="320" mass="37809">MDTDYGTVHTQQSVKGNTLILLIYFISFIVGFPGNCTVIWFTGYRWKKSVTTIWFLNLAIADTLFVIFIPFEITYILMGHYWPFGLFVCRIGSLMFNTGMYASIFFLTFISIDRYCLAFRRDICNKYRYRINIMVMIIISWIISILLSTPYMYFKNTNEKYRNNRDCLEDYHSDNNTYLLRRVVFCISLVMRYLVPSVVMLFCYCLLLFKHSLFLSKGQTYTIVIMITSFMVLWTPYNILYFIDVIGSHYYNADTIIDAAPISISLIFLSSSINPMIYMLVGRYVSFENYSMRESLKLILSEERDNQTNHENEIKMENIN</sequence>
<reference key="1">
    <citation type="journal article" date="2000" name="J. Virol.">
        <title>The genome of fowlpox virus.</title>
        <authorList>
            <person name="Afonso C.L."/>
            <person name="Tulman E.R."/>
            <person name="Lu Z."/>
            <person name="Zsak L."/>
            <person name="Kutish G.F."/>
            <person name="Rock D.L."/>
        </authorList>
    </citation>
    <scope>NUCLEOTIDE SEQUENCE [LARGE SCALE GENOMIC DNA]</scope>
</reference>
<name>V021_FOWPN</name>
<organism>
    <name type="scientific">Fowlpox virus (strain NVSL)</name>
    <name type="common">FPV</name>
    <dbReference type="NCBI Taxonomy" id="928301"/>
    <lineage>
        <taxon>Viruses</taxon>
        <taxon>Varidnaviria</taxon>
        <taxon>Bamfordvirae</taxon>
        <taxon>Nucleocytoviricota</taxon>
        <taxon>Pokkesviricetes</taxon>
        <taxon>Chitovirales</taxon>
        <taxon>Poxviridae</taxon>
        <taxon>Chordopoxvirinae</taxon>
        <taxon>Avipoxvirus</taxon>
        <taxon>Fowlpox virus</taxon>
    </lineage>
</organism>
<comment type="subcellular location">
    <subcellularLocation>
        <location evidence="3">Host cell membrane</location>
        <topology evidence="3">Multi-pass membrane protein</topology>
    </subcellularLocation>
</comment>
<comment type="similarity">
    <text evidence="2">Belongs to the G-protein coupled receptor 1 family.</text>
</comment>